<name>CMOB_SALPA</name>
<sequence>MIEFGNFYQLIAKNHLSHWLETLPAQIAAWQREQQHGLFKQWSNAVEFLPEITPWRLDLLHSVTAESETPLSEGQLKRIDTLLRNLMPWRKGPFSLYGVDIDTEWRSDWKWDRVLPHLSDLTGRTILDVGCGSGYHLWRMIGAGAHLAVGIDPTQLFLCQFEAVRKLLGNDQRAHLLPLGIEQLPALKAFDTVFSMGVLYHRRSPLEHLWQLKDQLVNEGELVLETLVVDGDENTVLVPGDRYAQMRNVYFIPSAPALKKWLEKCGFVDVRIADVCVTTTEEQCRTEWMVTESLADFLDPNDRSKTVEGYPAPQRAVLIARKR</sequence>
<dbReference type="EC" id="2.5.1.-" evidence="1"/>
<dbReference type="EMBL" id="CP000026">
    <property type="protein sequence ID" value="AAV76938.1"/>
    <property type="molecule type" value="Genomic_DNA"/>
</dbReference>
<dbReference type="RefSeq" id="WP_000569028.1">
    <property type="nucleotide sequence ID" value="NC_006511.1"/>
</dbReference>
<dbReference type="SMR" id="Q5PMY9"/>
<dbReference type="KEGG" id="spt:SPA0963"/>
<dbReference type="HOGENOM" id="CLU_052665_0_0_6"/>
<dbReference type="Proteomes" id="UP000008185">
    <property type="component" value="Chromosome"/>
</dbReference>
<dbReference type="GO" id="GO:0008168">
    <property type="term" value="F:methyltransferase activity"/>
    <property type="evidence" value="ECO:0007669"/>
    <property type="project" value="TreeGrafter"/>
</dbReference>
<dbReference type="GO" id="GO:0016765">
    <property type="term" value="F:transferase activity, transferring alkyl or aryl (other than methyl) groups"/>
    <property type="evidence" value="ECO:0007669"/>
    <property type="project" value="UniProtKB-UniRule"/>
</dbReference>
<dbReference type="GO" id="GO:0002098">
    <property type="term" value="P:tRNA wobble uridine modification"/>
    <property type="evidence" value="ECO:0007669"/>
    <property type="project" value="InterPro"/>
</dbReference>
<dbReference type="CDD" id="cd02440">
    <property type="entry name" value="AdoMet_MTases"/>
    <property type="match status" value="1"/>
</dbReference>
<dbReference type="FunFam" id="3.40.50.150:FF:000080">
    <property type="entry name" value="tRNA U34 carboxymethyltransferase"/>
    <property type="match status" value="1"/>
</dbReference>
<dbReference type="Gene3D" id="3.40.50.150">
    <property type="entry name" value="Vaccinia Virus protein VP39"/>
    <property type="match status" value="1"/>
</dbReference>
<dbReference type="HAMAP" id="MF_01590">
    <property type="entry name" value="tRNA_carboxymethyltr_CmoB"/>
    <property type="match status" value="1"/>
</dbReference>
<dbReference type="InterPro" id="IPR010017">
    <property type="entry name" value="CmoB"/>
</dbReference>
<dbReference type="InterPro" id="IPR027555">
    <property type="entry name" value="Mo5U34_MeTrfas-like"/>
</dbReference>
<dbReference type="InterPro" id="IPR029063">
    <property type="entry name" value="SAM-dependent_MTases_sf"/>
</dbReference>
<dbReference type="NCBIfam" id="NF011650">
    <property type="entry name" value="PRK15068.1"/>
    <property type="match status" value="1"/>
</dbReference>
<dbReference type="NCBIfam" id="TIGR00452">
    <property type="entry name" value="tRNA 5-methoxyuridine(34)/uridine 5-oxyacetic acid(34) synthase CmoB"/>
    <property type="match status" value="1"/>
</dbReference>
<dbReference type="PANTHER" id="PTHR43464">
    <property type="entry name" value="METHYLTRANSFERASE"/>
    <property type="match status" value="1"/>
</dbReference>
<dbReference type="PANTHER" id="PTHR43464:SF95">
    <property type="entry name" value="TRNA U34 CARBOXYMETHYLTRANSFERASE"/>
    <property type="match status" value="1"/>
</dbReference>
<dbReference type="Pfam" id="PF08003">
    <property type="entry name" value="Methyltransf_9"/>
    <property type="match status" value="1"/>
</dbReference>
<dbReference type="SUPFAM" id="SSF53335">
    <property type="entry name" value="S-adenosyl-L-methionine-dependent methyltransferases"/>
    <property type="match status" value="1"/>
</dbReference>
<protein>
    <recommendedName>
        <fullName evidence="1">tRNA U34 carboxymethyltransferase</fullName>
        <ecNumber evidence="1">2.5.1.-</ecNumber>
    </recommendedName>
</protein>
<reference key="1">
    <citation type="journal article" date="2004" name="Nat. Genet.">
        <title>Comparison of genome degradation in Paratyphi A and Typhi, human-restricted serovars of Salmonella enterica that cause typhoid.</title>
        <authorList>
            <person name="McClelland M."/>
            <person name="Sanderson K.E."/>
            <person name="Clifton S.W."/>
            <person name="Latreille P."/>
            <person name="Porwollik S."/>
            <person name="Sabo A."/>
            <person name="Meyer R."/>
            <person name="Bieri T."/>
            <person name="Ozersky P."/>
            <person name="McLellan M."/>
            <person name="Harkins C.R."/>
            <person name="Wang C."/>
            <person name="Nguyen C."/>
            <person name="Berghoff A."/>
            <person name="Elliott G."/>
            <person name="Kohlberg S."/>
            <person name="Strong C."/>
            <person name="Du F."/>
            <person name="Carter J."/>
            <person name="Kremizki C."/>
            <person name="Layman D."/>
            <person name="Leonard S."/>
            <person name="Sun H."/>
            <person name="Fulton L."/>
            <person name="Nash W."/>
            <person name="Miner T."/>
            <person name="Minx P."/>
            <person name="Delehaunty K."/>
            <person name="Fronick C."/>
            <person name="Magrini V."/>
            <person name="Nhan M."/>
            <person name="Warren W."/>
            <person name="Florea L."/>
            <person name="Spieth J."/>
            <person name="Wilson R.K."/>
        </authorList>
    </citation>
    <scope>NUCLEOTIDE SEQUENCE [LARGE SCALE GENOMIC DNA]</scope>
    <source>
        <strain>ATCC 9150 / SARB42</strain>
    </source>
</reference>
<organism>
    <name type="scientific">Salmonella paratyphi A (strain ATCC 9150 / SARB42)</name>
    <dbReference type="NCBI Taxonomy" id="295319"/>
    <lineage>
        <taxon>Bacteria</taxon>
        <taxon>Pseudomonadati</taxon>
        <taxon>Pseudomonadota</taxon>
        <taxon>Gammaproteobacteria</taxon>
        <taxon>Enterobacterales</taxon>
        <taxon>Enterobacteriaceae</taxon>
        <taxon>Salmonella</taxon>
    </lineage>
</organism>
<comment type="function">
    <text evidence="1">Catalyzes carboxymethyl transfer from carboxy-S-adenosyl-L-methionine (Cx-SAM) to 5-hydroxyuridine (ho5U) to form 5-carboxymethoxyuridine (cmo5U) at position 34 in tRNAs.</text>
</comment>
<comment type="catalytic activity">
    <reaction evidence="1">
        <text>carboxy-S-adenosyl-L-methionine + 5-hydroxyuridine(34) in tRNA = 5-carboxymethoxyuridine(34) in tRNA + S-adenosyl-L-homocysteine + H(+)</text>
        <dbReference type="Rhea" id="RHEA:52848"/>
        <dbReference type="Rhea" id="RHEA-COMP:13381"/>
        <dbReference type="Rhea" id="RHEA-COMP:13383"/>
        <dbReference type="ChEBI" id="CHEBI:15378"/>
        <dbReference type="ChEBI" id="CHEBI:57856"/>
        <dbReference type="ChEBI" id="CHEBI:134278"/>
        <dbReference type="ChEBI" id="CHEBI:136877"/>
        <dbReference type="ChEBI" id="CHEBI:136879"/>
    </reaction>
</comment>
<comment type="subunit">
    <text evidence="1">Homotetramer.</text>
</comment>
<comment type="similarity">
    <text evidence="1">Belongs to the class I-like SAM-binding methyltransferase superfamily. CmoB family.</text>
</comment>
<keyword id="KW-0808">Transferase</keyword>
<keyword id="KW-0819">tRNA processing</keyword>
<gene>
    <name evidence="1" type="primary">cmoB</name>
    <name type="ordered locus">SPA0963</name>
</gene>
<evidence type="ECO:0000255" key="1">
    <source>
        <dbReference type="HAMAP-Rule" id="MF_01590"/>
    </source>
</evidence>
<accession>Q5PMY9</accession>
<feature type="chain" id="PRO_0000313960" description="tRNA U34 carboxymethyltransferase">
    <location>
        <begin position="1"/>
        <end position="323"/>
    </location>
</feature>
<feature type="binding site" evidence="1">
    <location>
        <position position="91"/>
    </location>
    <ligand>
        <name>carboxy-S-adenosyl-L-methionine</name>
        <dbReference type="ChEBI" id="CHEBI:134278"/>
    </ligand>
</feature>
<feature type="binding site" evidence="1">
    <location>
        <position position="105"/>
    </location>
    <ligand>
        <name>carboxy-S-adenosyl-L-methionine</name>
        <dbReference type="ChEBI" id="CHEBI:134278"/>
    </ligand>
</feature>
<feature type="binding site" evidence="1">
    <location>
        <position position="110"/>
    </location>
    <ligand>
        <name>carboxy-S-adenosyl-L-methionine</name>
        <dbReference type="ChEBI" id="CHEBI:134278"/>
    </ligand>
</feature>
<feature type="binding site" evidence="1">
    <location>
        <position position="130"/>
    </location>
    <ligand>
        <name>carboxy-S-adenosyl-L-methionine</name>
        <dbReference type="ChEBI" id="CHEBI:134278"/>
    </ligand>
</feature>
<feature type="binding site" evidence="1">
    <location>
        <begin position="152"/>
        <end position="154"/>
    </location>
    <ligand>
        <name>carboxy-S-adenosyl-L-methionine</name>
        <dbReference type="ChEBI" id="CHEBI:134278"/>
    </ligand>
</feature>
<feature type="binding site" evidence="1">
    <location>
        <begin position="181"/>
        <end position="182"/>
    </location>
    <ligand>
        <name>carboxy-S-adenosyl-L-methionine</name>
        <dbReference type="ChEBI" id="CHEBI:134278"/>
    </ligand>
</feature>
<feature type="binding site" evidence="1">
    <location>
        <position position="196"/>
    </location>
    <ligand>
        <name>carboxy-S-adenosyl-L-methionine</name>
        <dbReference type="ChEBI" id="CHEBI:134278"/>
    </ligand>
</feature>
<feature type="binding site" evidence="1">
    <location>
        <position position="200"/>
    </location>
    <ligand>
        <name>carboxy-S-adenosyl-L-methionine</name>
        <dbReference type="ChEBI" id="CHEBI:134278"/>
    </ligand>
</feature>
<feature type="binding site" evidence="1">
    <location>
        <position position="315"/>
    </location>
    <ligand>
        <name>carboxy-S-adenosyl-L-methionine</name>
        <dbReference type="ChEBI" id="CHEBI:134278"/>
    </ligand>
</feature>
<proteinExistence type="inferred from homology"/>